<dbReference type="EC" id="2.1.1.166" evidence="1"/>
<dbReference type="EMBL" id="CP000099">
    <property type="protein sequence ID" value="AAZ72141.1"/>
    <property type="molecule type" value="Genomic_DNA"/>
</dbReference>
<dbReference type="SMR" id="Q466Q1"/>
<dbReference type="STRING" id="269797.Mbar_A3260"/>
<dbReference type="PaxDb" id="269797-Mbar_A3260"/>
<dbReference type="KEGG" id="mba:Mbar_A3260"/>
<dbReference type="eggNOG" id="arCOG00079">
    <property type="taxonomic scope" value="Archaea"/>
</dbReference>
<dbReference type="HOGENOM" id="CLU_009422_4_4_2"/>
<dbReference type="OrthoDB" id="26307at2157"/>
<dbReference type="GO" id="GO:0005737">
    <property type="term" value="C:cytoplasm"/>
    <property type="evidence" value="ECO:0007669"/>
    <property type="project" value="UniProtKB-SubCell"/>
</dbReference>
<dbReference type="GO" id="GO:0008650">
    <property type="term" value="F:rRNA (uridine-2'-O-)-methyltransferase activity"/>
    <property type="evidence" value="ECO:0007669"/>
    <property type="project" value="UniProtKB-UniRule"/>
</dbReference>
<dbReference type="Gene3D" id="2.40.50.140">
    <property type="entry name" value="Nucleic acid-binding proteins"/>
    <property type="match status" value="1"/>
</dbReference>
<dbReference type="Gene3D" id="3.40.50.150">
    <property type="entry name" value="Vaccinia Virus protein VP39"/>
    <property type="match status" value="1"/>
</dbReference>
<dbReference type="HAMAP" id="MF_01547">
    <property type="entry name" value="RNA_methyltr_E"/>
    <property type="match status" value="1"/>
</dbReference>
<dbReference type="InterPro" id="IPR012340">
    <property type="entry name" value="NA-bd_OB-fold"/>
</dbReference>
<dbReference type="InterPro" id="IPR050082">
    <property type="entry name" value="RNA_methyltr_RlmE"/>
</dbReference>
<dbReference type="InterPro" id="IPR002877">
    <property type="entry name" value="RNA_MeTrfase_FtsJ_dom"/>
</dbReference>
<dbReference type="InterPro" id="IPR015507">
    <property type="entry name" value="rRNA-MeTfrase_E"/>
</dbReference>
<dbReference type="InterPro" id="IPR029063">
    <property type="entry name" value="SAM-dependent_MTases_sf"/>
</dbReference>
<dbReference type="InterPro" id="IPR002792">
    <property type="entry name" value="TRAM_dom"/>
</dbReference>
<dbReference type="PANTHER" id="PTHR10920:SF13">
    <property type="entry name" value="PRE-RRNA 2'-O-RIBOSE RNA METHYLTRANSFERASE FTSJ3"/>
    <property type="match status" value="1"/>
</dbReference>
<dbReference type="PANTHER" id="PTHR10920">
    <property type="entry name" value="RIBOSOMAL RNA METHYLTRANSFERASE"/>
    <property type="match status" value="1"/>
</dbReference>
<dbReference type="Pfam" id="PF01728">
    <property type="entry name" value="FtsJ"/>
    <property type="match status" value="1"/>
</dbReference>
<dbReference type="Pfam" id="PF01938">
    <property type="entry name" value="TRAM"/>
    <property type="match status" value="1"/>
</dbReference>
<dbReference type="SUPFAM" id="SSF50249">
    <property type="entry name" value="Nucleic acid-binding proteins"/>
    <property type="match status" value="1"/>
</dbReference>
<dbReference type="SUPFAM" id="SSF53335">
    <property type="entry name" value="S-adenosyl-L-methionine-dependent methyltransferases"/>
    <property type="match status" value="1"/>
</dbReference>
<dbReference type="PROSITE" id="PS50926">
    <property type="entry name" value="TRAM"/>
    <property type="match status" value="1"/>
</dbReference>
<keyword id="KW-0963">Cytoplasm</keyword>
<keyword id="KW-0489">Methyltransferase</keyword>
<keyword id="KW-0698">rRNA processing</keyword>
<keyword id="KW-0949">S-adenosyl-L-methionine</keyword>
<keyword id="KW-0808">Transferase</keyword>
<reference key="1">
    <citation type="journal article" date="2006" name="J. Bacteriol.">
        <title>The Methanosarcina barkeri genome: comparative analysis with Methanosarcina acetivorans and Methanosarcina mazei reveals extensive rearrangement within methanosarcinal genomes.</title>
        <authorList>
            <person name="Maeder D.L."/>
            <person name="Anderson I."/>
            <person name="Brettin T.S."/>
            <person name="Bruce D.C."/>
            <person name="Gilna P."/>
            <person name="Han C.S."/>
            <person name="Lapidus A."/>
            <person name="Metcalf W.W."/>
            <person name="Saunders E."/>
            <person name="Tapia R."/>
            <person name="Sowers K.R."/>
        </authorList>
    </citation>
    <scope>NUCLEOTIDE SEQUENCE [LARGE SCALE GENOMIC DNA]</scope>
    <source>
        <strain>Fusaro / DSM 804</strain>
    </source>
</reference>
<organism>
    <name type="scientific">Methanosarcina barkeri (strain Fusaro / DSM 804)</name>
    <dbReference type="NCBI Taxonomy" id="269797"/>
    <lineage>
        <taxon>Archaea</taxon>
        <taxon>Methanobacteriati</taxon>
        <taxon>Methanobacteriota</taxon>
        <taxon>Stenosarchaea group</taxon>
        <taxon>Methanomicrobia</taxon>
        <taxon>Methanosarcinales</taxon>
        <taxon>Methanosarcinaceae</taxon>
        <taxon>Methanosarcina</taxon>
    </lineage>
</organism>
<sequence length="263" mass="29097">MARDRRDYYYRQAKEEGYRSRASFKLKQINERHHIINRGDSVVDLGAAPGGWLQVAKELSGGKVLGVDLQRIVPIEGVETIQGNINADSTIQKIIKTVGAKGADVVLCDAAPNLSGNWSYDHARSIELATSALECAKKILKPKGNFVVKVFQGDMFNDYMQKVRDNFVRTMAYSPKASRSQSAEIYVIGKKFLTAPLRKGDKFVVDIEKLGSSGDGAVLIEGFVVFVKEVEVGEKVRIKITDVKPNFAFADVAERLGKTEKPE</sequence>
<comment type="function">
    <text evidence="1">Specifically methylates the uridine in position 2552 of 23S rRNA at the 2'-O position of the ribose in the fully assembled 50S ribosomal subunit.</text>
</comment>
<comment type="catalytic activity">
    <reaction evidence="1">
        <text>uridine(2552) in 23S rRNA + S-adenosyl-L-methionine = 2'-O-methyluridine(2552) in 23S rRNA + S-adenosyl-L-homocysteine + H(+)</text>
        <dbReference type="Rhea" id="RHEA:42720"/>
        <dbReference type="Rhea" id="RHEA-COMP:10202"/>
        <dbReference type="Rhea" id="RHEA-COMP:10203"/>
        <dbReference type="ChEBI" id="CHEBI:15378"/>
        <dbReference type="ChEBI" id="CHEBI:57856"/>
        <dbReference type="ChEBI" id="CHEBI:59789"/>
        <dbReference type="ChEBI" id="CHEBI:65315"/>
        <dbReference type="ChEBI" id="CHEBI:74478"/>
        <dbReference type="EC" id="2.1.1.166"/>
    </reaction>
</comment>
<comment type="subcellular location">
    <subcellularLocation>
        <location evidence="1">Cytoplasm</location>
    </subcellularLocation>
</comment>
<comment type="similarity">
    <text evidence="1">Belongs to the class I-like SAM-binding methyltransferase superfamily. RNA methyltransferase RlmE family.</text>
</comment>
<feature type="chain" id="PRO_0000282820" description="Ribosomal RNA large subunit methyltransferase E">
    <location>
        <begin position="1"/>
        <end position="263"/>
    </location>
</feature>
<feature type="domain" description="TRAM" evidence="1">
    <location>
        <begin position="196"/>
        <end position="254"/>
    </location>
</feature>
<feature type="active site" description="Proton acceptor" evidence="1">
    <location>
        <position position="149"/>
    </location>
</feature>
<feature type="binding site" evidence="1">
    <location>
        <position position="50"/>
    </location>
    <ligand>
        <name>S-adenosyl-L-methionine</name>
        <dbReference type="ChEBI" id="CHEBI:59789"/>
    </ligand>
</feature>
<feature type="binding site" evidence="1">
    <location>
        <position position="52"/>
    </location>
    <ligand>
        <name>S-adenosyl-L-methionine</name>
        <dbReference type="ChEBI" id="CHEBI:59789"/>
    </ligand>
</feature>
<feature type="binding site" evidence="1">
    <location>
        <position position="68"/>
    </location>
    <ligand>
        <name>S-adenosyl-L-methionine</name>
        <dbReference type="ChEBI" id="CHEBI:59789"/>
    </ligand>
</feature>
<feature type="binding site" evidence="1">
    <location>
        <position position="84"/>
    </location>
    <ligand>
        <name>S-adenosyl-L-methionine</name>
        <dbReference type="ChEBI" id="CHEBI:59789"/>
    </ligand>
</feature>
<feature type="binding site" evidence="1">
    <location>
        <position position="109"/>
    </location>
    <ligand>
        <name>S-adenosyl-L-methionine</name>
        <dbReference type="ChEBI" id="CHEBI:59789"/>
    </ligand>
</feature>
<gene>
    <name evidence="1" type="primary">rlmE</name>
    <name evidence="1" type="synonym">rrmJ</name>
    <name type="ordered locus">Mbar_A3260</name>
</gene>
<name>RLME_METBF</name>
<proteinExistence type="inferred from homology"/>
<evidence type="ECO:0000255" key="1">
    <source>
        <dbReference type="HAMAP-Rule" id="MF_01547"/>
    </source>
</evidence>
<accession>Q466Q1</accession>
<protein>
    <recommendedName>
        <fullName evidence="1">Ribosomal RNA large subunit methyltransferase E</fullName>
        <ecNumber evidence="1">2.1.1.166</ecNumber>
    </recommendedName>
    <alternativeName>
        <fullName evidence="1">23S rRNA Um2552 methyltransferase</fullName>
    </alternativeName>
    <alternativeName>
        <fullName evidence="1">rRNA (uridine-2'-O-)-methyltransferase</fullName>
    </alternativeName>
</protein>